<feature type="chain" id="PRO_1000001726" description="Phosphate acyltransferase">
    <location>
        <begin position="1"/>
        <end position="368"/>
    </location>
</feature>
<feature type="region of interest" description="Disordered" evidence="2">
    <location>
        <begin position="337"/>
        <end position="368"/>
    </location>
</feature>
<sequence length="368" mass="39002">MTVKLTIDCMGGDHGPSVTVPAAVKFVRAHPDAHLMLVGIESAIRAQLKKLKALDDPALTIVPATEVVAMDDPVEVALRKKKDSSMRVALNHVKEGAAQACISAGNTGALMAVSRYVLKTLPGIERPAIAFALPNPTGYTMMLDLGANVDCEPQHLLQFAEMGHALVAALEGKERPTIGLLNIGEEVIKGNETIKRAGELLRASTLNFRGNVEGNDIYKGTVDVIVCDGFVGNVALKTSEGLAQMLSDIIREEFGRSLMSKLMALLALPVLMRFKKRVDHRQYNGAALLGLKSLVIKSHGSADAYAFEWAIKRGYDAVKNGVLERLARAMADNSVSLGDGEHDAGGAGQASPAAGHHAEPSAAQSSKA</sequence>
<evidence type="ECO:0000255" key="1">
    <source>
        <dbReference type="HAMAP-Rule" id="MF_00019"/>
    </source>
</evidence>
<evidence type="ECO:0000256" key="2">
    <source>
        <dbReference type="SAM" id="MobiDB-lite"/>
    </source>
</evidence>
<protein>
    <recommendedName>
        <fullName evidence="1">Phosphate acyltransferase</fullName>
        <ecNumber evidence="1">2.3.1.274</ecNumber>
    </recommendedName>
    <alternativeName>
        <fullName evidence="1">Acyl-ACP phosphotransacylase</fullName>
    </alternativeName>
    <alternativeName>
        <fullName evidence="1">Acyl-[acyl-carrier-protein]--phosphate acyltransferase</fullName>
    </alternativeName>
    <alternativeName>
        <fullName evidence="1">Phosphate-acyl-ACP acyltransferase</fullName>
    </alternativeName>
</protein>
<organism>
    <name type="scientific">Burkholderia orbicola (strain AU 1054)</name>
    <dbReference type="NCBI Taxonomy" id="331271"/>
    <lineage>
        <taxon>Bacteria</taxon>
        <taxon>Pseudomonadati</taxon>
        <taxon>Pseudomonadota</taxon>
        <taxon>Betaproteobacteria</taxon>
        <taxon>Burkholderiales</taxon>
        <taxon>Burkholderiaceae</taxon>
        <taxon>Burkholderia</taxon>
        <taxon>Burkholderia cepacia complex</taxon>
        <taxon>Burkholderia orbicola</taxon>
    </lineage>
</organism>
<keyword id="KW-0963">Cytoplasm</keyword>
<keyword id="KW-0444">Lipid biosynthesis</keyword>
<keyword id="KW-0443">Lipid metabolism</keyword>
<keyword id="KW-0594">Phospholipid biosynthesis</keyword>
<keyword id="KW-1208">Phospholipid metabolism</keyword>
<keyword id="KW-0808">Transferase</keyword>
<reference key="1">
    <citation type="submission" date="2006-05" db="EMBL/GenBank/DDBJ databases">
        <title>Complete sequence of chromosome 1 of Burkholderia cenocepacia AU 1054.</title>
        <authorList>
            <consortium name="US DOE Joint Genome Institute"/>
            <person name="Copeland A."/>
            <person name="Lucas S."/>
            <person name="Lapidus A."/>
            <person name="Barry K."/>
            <person name="Detter J.C."/>
            <person name="Glavina del Rio T."/>
            <person name="Hammon N."/>
            <person name="Israni S."/>
            <person name="Dalin E."/>
            <person name="Tice H."/>
            <person name="Pitluck S."/>
            <person name="Chain P."/>
            <person name="Malfatti S."/>
            <person name="Shin M."/>
            <person name="Vergez L."/>
            <person name="Schmutz J."/>
            <person name="Larimer F."/>
            <person name="Land M."/>
            <person name="Hauser L."/>
            <person name="Kyrpides N."/>
            <person name="Lykidis A."/>
            <person name="LiPuma J.J."/>
            <person name="Konstantinidis K."/>
            <person name="Tiedje J.M."/>
            <person name="Richardson P."/>
        </authorList>
    </citation>
    <scope>NUCLEOTIDE SEQUENCE [LARGE SCALE GENOMIC DNA]</scope>
    <source>
        <strain>AU 1054</strain>
    </source>
</reference>
<comment type="function">
    <text evidence="1">Catalyzes the reversible formation of acyl-phosphate (acyl-PO(4)) from acyl-[acyl-carrier-protein] (acyl-ACP). This enzyme utilizes acyl-ACP as fatty acyl donor, but not acyl-CoA.</text>
</comment>
<comment type="catalytic activity">
    <reaction evidence="1">
        <text>a fatty acyl-[ACP] + phosphate = an acyl phosphate + holo-[ACP]</text>
        <dbReference type="Rhea" id="RHEA:42292"/>
        <dbReference type="Rhea" id="RHEA-COMP:9685"/>
        <dbReference type="Rhea" id="RHEA-COMP:14125"/>
        <dbReference type="ChEBI" id="CHEBI:43474"/>
        <dbReference type="ChEBI" id="CHEBI:59918"/>
        <dbReference type="ChEBI" id="CHEBI:64479"/>
        <dbReference type="ChEBI" id="CHEBI:138651"/>
        <dbReference type="EC" id="2.3.1.274"/>
    </reaction>
</comment>
<comment type="pathway">
    <text evidence="1">Lipid metabolism; phospholipid metabolism.</text>
</comment>
<comment type="subunit">
    <text evidence="1">Homodimer. Probably interacts with PlsY.</text>
</comment>
<comment type="subcellular location">
    <subcellularLocation>
        <location evidence="1">Cytoplasm</location>
    </subcellularLocation>
    <text evidence="1">Associated with the membrane possibly through PlsY.</text>
</comment>
<comment type="similarity">
    <text evidence="1">Belongs to the PlsX family.</text>
</comment>
<dbReference type="EC" id="2.3.1.274" evidence="1"/>
<dbReference type="EMBL" id="CP000378">
    <property type="protein sequence ID" value="ABF75550.1"/>
    <property type="molecule type" value="Genomic_DNA"/>
</dbReference>
<dbReference type="SMR" id="Q1BXV5"/>
<dbReference type="HOGENOM" id="CLU_039379_1_0_4"/>
<dbReference type="UniPathway" id="UPA00085"/>
<dbReference type="GO" id="GO:0005737">
    <property type="term" value="C:cytoplasm"/>
    <property type="evidence" value="ECO:0007669"/>
    <property type="project" value="UniProtKB-SubCell"/>
</dbReference>
<dbReference type="GO" id="GO:0043811">
    <property type="term" value="F:phosphate:acyl-[acyl carrier protein] acyltransferase activity"/>
    <property type="evidence" value="ECO:0007669"/>
    <property type="project" value="UniProtKB-UniRule"/>
</dbReference>
<dbReference type="GO" id="GO:0006633">
    <property type="term" value="P:fatty acid biosynthetic process"/>
    <property type="evidence" value="ECO:0007669"/>
    <property type="project" value="UniProtKB-UniRule"/>
</dbReference>
<dbReference type="GO" id="GO:0008654">
    <property type="term" value="P:phospholipid biosynthetic process"/>
    <property type="evidence" value="ECO:0007669"/>
    <property type="project" value="UniProtKB-KW"/>
</dbReference>
<dbReference type="Gene3D" id="3.40.718.10">
    <property type="entry name" value="Isopropylmalate Dehydrogenase"/>
    <property type="match status" value="1"/>
</dbReference>
<dbReference type="HAMAP" id="MF_00019">
    <property type="entry name" value="PlsX"/>
    <property type="match status" value="1"/>
</dbReference>
<dbReference type="InterPro" id="IPR003664">
    <property type="entry name" value="FA_synthesis"/>
</dbReference>
<dbReference type="InterPro" id="IPR012281">
    <property type="entry name" value="Phospholipid_synth_PlsX-like"/>
</dbReference>
<dbReference type="NCBIfam" id="TIGR00182">
    <property type="entry name" value="plsX"/>
    <property type="match status" value="1"/>
</dbReference>
<dbReference type="PANTHER" id="PTHR30100">
    <property type="entry name" value="FATTY ACID/PHOSPHOLIPID SYNTHESIS PROTEIN PLSX"/>
    <property type="match status" value="1"/>
</dbReference>
<dbReference type="PANTHER" id="PTHR30100:SF1">
    <property type="entry name" value="PHOSPHATE ACYLTRANSFERASE"/>
    <property type="match status" value="1"/>
</dbReference>
<dbReference type="Pfam" id="PF02504">
    <property type="entry name" value="FA_synthesis"/>
    <property type="match status" value="1"/>
</dbReference>
<dbReference type="PIRSF" id="PIRSF002465">
    <property type="entry name" value="Phsphlp_syn_PlsX"/>
    <property type="match status" value="1"/>
</dbReference>
<dbReference type="SUPFAM" id="SSF53659">
    <property type="entry name" value="Isocitrate/Isopropylmalate dehydrogenase-like"/>
    <property type="match status" value="1"/>
</dbReference>
<gene>
    <name evidence="1" type="primary">plsX</name>
    <name type="ordered locus">Bcen_0640</name>
</gene>
<accession>Q1BXV5</accession>
<name>PLSX_BURO1</name>
<proteinExistence type="inferred from homology"/>